<sequence>MAAGEEAPSILLPAVYDIVWSAVVFVVLLVVIWKYALPRVYAMLDGRTEAIAGGIEKAERAQAEADAAKAELTAQLVEARAEAGRIREQARVDASVIAAEIKEQATADAARITASGTQQIEAERQQAVVSLRSEVGSLAIDLASGVIGQSLADDQRSTALVDRFLADLEASETAGRTGSAS</sequence>
<accession>B0RED8</accession>
<gene>
    <name evidence="1" type="primary">atpF</name>
    <name type="ordered locus">CMS1928</name>
</gene>
<name>ATPF_CLASE</name>
<organism>
    <name type="scientific">Clavibacter sepedonicus</name>
    <name type="common">Clavibacter michiganensis subsp. sepedonicus</name>
    <dbReference type="NCBI Taxonomy" id="31964"/>
    <lineage>
        <taxon>Bacteria</taxon>
        <taxon>Bacillati</taxon>
        <taxon>Actinomycetota</taxon>
        <taxon>Actinomycetes</taxon>
        <taxon>Micrococcales</taxon>
        <taxon>Microbacteriaceae</taxon>
        <taxon>Clavibacter</taxon>
    </lineage>
</organism>
<reference key="1">
    <citation type="journal article" date="2008" name="J. Bacteriol.">
        <title>Genome of the actinomycete plant pathogen Clavibacter michiganensis subsp. sepedonicus suggests recent niche adaptation.</title>
        <authorList>
            <person name="Bentley S.D."/>
            <person name="Corton C."/>
            <person name="Brown S.E."/>
            <person name="Barron A."/>
            <person name="Clark L."/>
            <person name="Doggett J."/>
            <person name="Harris B."/>
            <person name="Ormond D."/>
            <person name="Quail M.A."/>
            <person name="May G."/>
            <person name="Francis D."/>
            <person name="Knudson D."/>
            <person name="Parkhill J."/>
            <person name="Ishimaru C.A."/>
        </authorList>
    </citation>
    <scope>NUCLEOTIDE SEQUENCE [LARGE SCALE GENOMIC DNA]</scope>
    <source>
        <strain>ATCC 33113 / DSM 20744 / JCM 9667 / LMG 2889 / ICMP 2535 / C-1</strain>
    </source>
</reference>
<proteinExistence type="inferred from homology"/>
<feature type="chain" id="PRO_0000368418" description="ATP synthase subunit b">
    <location>
        <begin position="1"/>
        <end position="181"/>
    </location>
</feature>
<feature type="transmembrane region" description="Helical" evidence="1">
    <location>
        <begin position="12"/>
        <end position="32"/>
    </location>
</feature>
<protein>
    <recommendedName>
        <fullName evidence="1">ATP synthase subunit b</fullName>
    </recommendedName>
    <alternativeName>
        <fullName evidence="1">ATP synthase F(0) sector subunit b</fullName>
    </alternativeName>
    <alternativeName>
        <fullName evidence="1">ATPase subunit I</fullName>
    </alternativeName>
    <alternativeName>
        <fullName evidence="1">F-type ATPase subunit b</fullName>
        <shortName evidence="1">F-ATPase subunit b</shortName>
    </alternativeName>
</protein>
<dbReference type="EMBL" id="AM849034">
    <property type="protein sequence ID" value="CAQ02030.1"/>
    <property type="molecule type" value="Genomic_DNA"/>
</dbReference>
<dbReference type="SMR" id="B0RED8"/>
<dbReference type="STRING" id="31964.CMS1928"/>
<dbReference type="KEGG" id="cms:CMS1928"/>
<dbReference type="eggNOG" id="COG0711">
    <property type="taxonomic scope" value="Bacteria"/>
</dbReference>
<dbReference type="HOGENOM" id="CLU_079215_5_2_11"/>
<dbReference type="Proteomes" id="UP000001318">
    <property type="component" value="Chromosome"/>
</dbReference>
<dbReference type="GO" id="GO:0005886">
    <property type="term" value="C:plasma membrane"/>
    <property type="evidence" value="ECO:0007669"/>
    <property type="project" value="UniProtKB-SubCell"/>
</dbReference>
<dbReference type="GO" id="GO:0045259">
    <property type="term" value="C:proton-transporting ATP synthase complex"/>
    <property type="evidence" value="ECO:0007669"/>
    <property type="project" value="UniProtKB-KW"/>
</dbReference>
<dbReference type="GO" id="GO:0046933">
    <property type="term" value="F:proton-transporting ATP synthase activity, rotational mechanism"/>
    <property type="evidence" value="ECO:0007669"/>
    <property type="project" value="UniProtKB-UniRule"/>
</dbReference>
<dbReference type="GO" id="GO:0046961">
    <property type="term" value="F:proton-transporting ATPase activity, rotational mechanism"/>
    <property type="evidence" value="ECO:0007669"/>
    <property type="project" value="TreeGrafter"/>
</dbReference>
<dbReference type="CDD" id="cd06503">
    <property type="entry name" value="ATP-synt_Fo_b"/>
    <property type="match status" value="1"/>
</dbReference>
<dbReference type="Gene3D" id="1.20.5.620">
    <property type="entry name" value="F1F0 ATP synthase subunit B, membrane domain"/>
    <property type="match status" value="1"/>
</dbReference>
<dbReference type="HAMAP" id="MF_01398">
    <property type="entry name" value="ATP_synth_b_bprime"/>
    <property type="match status" value="1"/>
</dbReference>
<dbReference type="InterPro" id="IPR028987">
    <property type="entry name" value="ATP_synth_B-like_membr_sf"/>
</dbReference>
<dbReference type="InterPro" id="IPR002146">
    <property type="entry name" value="ATP_synth_b/b'su_bac/chlpt"/>
</dbReference>
<dbReference type="InterPro" id="IPR005864">
    <property type="entry name" value="ATP_synth_F0_bsu_bac"/>
</dbReference>
<dbReference type="InterPro" id="IPR050059">
    <property type="entry name" value="ATP_synthase_B_chain"/>
</dbReference>
<dbReference type="NCBIfam" id="TIGR01144">
    <property type="entry name" value="ATP_synt_b"/>
    <property type="match status" value="1"/>
</dbReference>
<dbReference type="NCBIfam" id="NF004412">
    <property type="entry name" value="PRK05759.1-3"/>
    <property type="match status" value="1"/>
</dbReference>
<dbReference type="PANTHER" id="PTHR33445:SF1">
    <property type="entry name" value="ATP SYNTHASE SUBUNIT B"/>
    <property type="match status" value="1"/>
</dbReference>
<dbReference type="PANTHER" id="PTHR33445">
    <property type="entry name" value="ATP SYNTHASE SUBUNIT B', CHLOROPLASTIC"/>
    <property type="match status" value="1"/>
</dbReference>
<dbReference type="Pfam" id="PF00430">
    <property type="entry name" value="ATP-synt_B"/>
    <property type="match status" value="1"/>
</dbReference>
<dbReference type="SUPFAM" id="SSF81573">
    <property type="entry name" value="F1F0 ATP synthase subunit B, membrane domain"/>
    <property type="match status" value="1"/>
</dbReference>
<comment type="function">
    <text evidence="1">F(1)F(0) ATP synthase produces ATP from ADP in the presence of a proton or sodium gradient. F-type ATPases consist of two structural domains, F(1) containing the extramembraneous catalytic core and F(0) containing the membrane proton channel, linked together by a central stalk and a peripheral stalk. During catalysis, ATP synthesis in the catalytic domain of F(1) is coupled via a rotary mechanism of the central stalk subunits to proton translocation.</text>
</comment>
<comment type="function">
    <text evidence="1">Component of the F(0) channel, it forms part of the peripheral stalk, linking F(1) to F(0).</text>
</comment>
<comment type="subunit">
    <text evidence="1">F-type ATPases have 2 components, F(1) - the catalytic core - and F(0) - the membrane proton channel. F(1) has five subunits: alpha(3), beta(3), gamma(1), delta(1), epsilon(1). F(0) has three main subunits: a(1), b(2) and c(10-14). The alpha and beta chains form an alternating ring which encloses part of the gamma chain. F(1) is attached to F(0) by a central stalk formed by the gamma and epsilon chains, while a peripheral stalk is formed by the delta and b chains.</text>
</comment>
<comment type="subcellular location">
    <subcellularLocation>
        <location evidence="1">Cell membrane</location>
        <topology evidence="1">Single-pass membrane protein</topology>
    </subcellularLocation>
</comment>
<comment type="similarity">
    <text evidence="1">Belongs to the ATPase B chain family.</text>
</comment>
<evidence type="ECO:0000255" key="1">
    <source>
        <dbReference type="HAMAP-Rule" id="MF_01398"/>
    </source>
</evidence>
<keyword id="KW-0066">ATP synthesis</keyword>
<keyword id="KW-1003">Cell membrane</keyword>
<keyword id="KW-0138">CF(0)</keyword>
<keyword id="KW-0375">Hydrogen ion transport</keyword>
<keyword id="KW-0406">Ion transport</keyword>
<keyword id="KW-0472">Membrane</keyword>
<keyword id="KW-0812">Transmembrane</keyword>
<keyword id="KW-1133">Transmembrane helix</keyword>
<keyword id="KW-0813">Transport</keyword>